<reference key="1">
    <citation type="journal article" date="2008" name="BMC Genomics">
        <title>The missing link: Bordetella petrii is endowed with both the metabolic versatility of environmental bacteria and virulence traits of pathogenic Bordetellae.</title>
        <authorList>
            <person name="Gross R."/>
            <person name="Guzman C.A."/>
            <person name="Sebaihia M."/>
            <person name="Martin dos Santos V.A.P."/>
            <person name="Pieper D.H."/>
            <person name="Koebnik R."/>
            <person name="Lechner M."/>
            <person name="Bartels D."/>
            <person name="Buhrmester J."/>
            <person name="Choudhuri J.V."/>
            <person name="Ebensen T."/>
            <person name="Gaigalat L."/>
            <person name="Herrmann S."/>
            <person name="Khachane A.N."/>
            <person name="Larisch C."/>
            <person name="Link S."/>
            <person name="Linke B."/>
            <person name="Meyer F."/>
            <person name="Mormann S."/>
            <person name="Nakunst D."/>
            <person name="Rueckert C."/>
            <person name="Schneiker-Bekel S."/>
            <person name="Schulze K."/>
            <person name="Voerholter F.-J."/>
            <person name="Yevsa T."/>
            <person name="Engle J.T."/>
            <person name="Goldman W.E."/>
            <person name="Puehler A."/>
            <person name="Goebel U.B."/>
            <person name="Goesmann A."/>
            <person name="Bloecker H."/>
            <person name="Kaiser O."/>
            <person name="Martinez-Arias R."/>
        </authorList>
    </citation>
    <scope>NUCLEOTIDE SEQUENCE [LARGE SCALE GENOMIC DNA]</scope>
    <source>
        <strain>ATCC BAA-461 / DSM 12804 / CCUG 43448</strain>
    </source>
</reference>
<organism>
    <name type="scientific">Bordetella petrii (strain ATCC BAA-461 / DSM 12804 / CCUG 43448)</name>
    <dbReference type="NCBI Taxonomy" id="340100"/>
    <lineage>
        <taxon>Bacteria</taxon>
        <taxon>Pseudomonadati</taxon>
        <taxon>Pseudomonadota</taxon>
        <taxon>Betaproteobacteria</taxon>
        <taxon>Burkholderiales</taxon>
        <taxon>Alcaligenaceae</taxon>
        <taxon>Bordetella</taxon>
    </lineage>
</organism>
<protein>
    <recommendedName>
        <fullName evidence="1">Chaperonin GroEL</fullName>
        <ecNumber evidence="1">5.6.1.7</ecNumber>
    </recommendedName>
    <alternativeName>
        <fullName evidence="1">60 kDa chaperonin</fullName>
    </alternativeName>
    <alternativeName>
        <fullName evidence="1">Chaperonin-60</fullName>
        <shortName evidence="1">Cpn60</shortName>
    </alternativeName>
</protein>
<accession>A9I685</accession>
<evidence type="ECO:0000255" key="1">
    <source>
        <dbReference type="HAMAP-Rule" id="MF_00600"/>
    </source>
</evidence>
<evidence type="ECO:0000256" key="2">
    <source>
        <dbReference type="SAM" id="MobiDB-lite"/>
    </source>
</evidence>
<comment type="function">
    <text evidence="1">Together with its co-chaperonin GroES, plays an essential role in assisting protein folding. The GroEL-GroES system forms a nano-cage that allows encapsulation of the non-native substrate proteins and provides a physical environment optimized to promote and accelerate protein folding.</text>
</comment>
<comment type="catalytic activity">
    <reaction evidence="1">
        <text>ATP + H2O + a folded polypeptide = ADP + phosphate + an unfolded polypeptide.</text>
        <dbReference type="EC" id="5.6.1.7"/>
    </reaction>
</comment>
<comment type="subunit">
    <text evidence="1">Forms a cylinder of 14 subunits composed of two heptameric rings stacked back-to-back. Interacts with the co-chaperonin GroES.</text>
</comment>
<comment type="subcellular location">
    <subcellularLocation>
        <location evidence="1">Cytoplasm</location>
    </subcellularLocation>
</comment>
<comment type="similarity">
    <text evidence="1">Belongs to the chaperonin (HSP60) family.</text>
</comment>
<keyword id="KW-0067">ATP-binding</keyword>
<keyword id="KW-0143">Chaperone</keyword>
<keyword id="KW-0963">Cytoplasm</keyword>
<keyword id="KW-0413">Isomerase</keyword>
<keyword id="KW-0547">Nucleotide-binding</keyword>
<dbReference type="EC" id="5.6.1.7" evidence="1"/>
<dbReference type="EMBL" id="AM902716">
    <property type="protein sequence ID" value="CAP44278.1"/>
    <property type="molecule type" value="Genomic_DNA"/>
</dbReference>
<dbReference type="SMR" id="A9I685"/>
<dbReference type="STRING" id="94624.Bpet3932"/>
<dbReference type="KEGG" id="bpt:Bpet3932"/>
<dbReference type="eggNOG" id="COG0459">
    <property type="taxonomic scope" value="Bacteria"/>
</dbReference>
<dbReference type="Proteomes" id="UP000001225">
    <property type="component" value="Chromosome"/>
</dbReference>
<dbReference type="GO" id="GO:0005737">
    <property type="term" value="C:cytoplasm"/>
    <property type="evidence" value="ECO:0007669"/>
    <property type="project" value="UniProtKB-SubCell"/>
</dbReference>
<dbReference type="GO" id="GO:0005524">
    <property type="term" value="F:ATP binding"/>
    <property type="evidence" value="ECO:0007669"/>
    <property type="project" value="UniProtKB-UniRule"/>
</dbReference>
<dbReference type="GO" id="GO:0140662">
    <property type="term" value="F:ATP-dependent protein folding chaperone"/>
    <property type="evidence" value="ECO:0007669"/>
    <property type="project" value="InterPro"/>
</dbReference>
<dbReference type="GO" id="GO:0016853">
    <property type="term" value="F:isomerase activity"/>
    <property type="evidence" value="ECO:0007669"/>
    <property type="project" value="UniProtKB-KW"/>
</dbReference>
<dbReference type="GO" id="GO:0051082">
    <property type="term" value="F:unfolded protein binding"/>
    <property type="evidence" value="ECO:0007669"/>
    <property type="project" value="UniProtKB-UniRule"/>
</dbReference>
<dbReference type="GO" id="GO:0042026">
    <property type="term" value="P:protein refolding"/>
    <property type="evidence" value="ECO:0007669"/>
    <property type="project" value="UniProtKB-UniRule"/>
</dbReference>
<dbReference type="CDD" id="cd03344">
    <property type="entry name" value="GroEL"/>
    <property type="match status" value="1"/>
</dbReference>
<dbReference type="FunFam" id="1.10.560.10:FF:000001">
    <property type="entry name" value="60 kDa chaperonin"/>
    <property type="match status" value="1"/>
</dbReference>
<dbReference type="FunFam" id="3.50.7.10:FF:000001">
    <property type="entry name" value="60 kDa chaperonin"/>
    <property type="match status" value="1"/>
</dbReference>
<dbReference type="Gene3D" id="3.50.7.10">
    <property type="entry name" value="GroEL"/>
    <property type="match status" value="1"/>
</dbReference>
<dbReference type="Gene3D" id="1.10.560.10">
    <property type="entry name" value="GroEL-like equatorial domain"/>
    <property type="match status" value="1"/>
</dbReference>
<dbReference type="Gene3D" id="3.30.260.10">
    <property type="entry name" value="TCP-1-like chaperonin intermediate domain"/>
    <property type="match status" value="1"/>
</dbReference>
<dbReference type="HAMAP" id="MF_00600">
    <property type="entry name" value="CH60"/>
    <property type="match status" value="1"/>
</dbReference>
<dbReference type="InterPro" id="IPR018370">
    <property type="entry name" value="Chaperonin_Cpn60_CS"/>
</dbReference>
<dbReference type="InterPro" id="IPR001844">
    <property type="entry name" value="Cpn60/GroEL"/>
</dbReference>
<dbReference type="InterPro" id="IPR002423">
    <property type="entry name" value="Cpn60/GroEL/TCP-1"/>
</dbReference>
<dbReference type="InterPro" id="IPR027409">
    <property type="entry name" value="GroEL-like_apical_dom_sf"/>
</dbReference>
<dbReference type="InterPro" id="IPR027413">
    <property type="entry name" value="GROEL-like_equatorial_sf"/>
</dbReference>
<dbReference type="InterPro" id="IPR027410">
    <property type="entry name" value="TCP-1-like_intermed_sf"/>
</dbReference>
<dbReference type="NCBIfam" id="TIGR02348">
    <property type="entry name" value="GroEL"/>
    <property type="match status" value="1"/>
</dbReference>
<dbReference type="NCBIfam" id="NF000592">
    <property type="entry name" value="PRK00013.1"/>
    <property type="match status" value="1"/>
</dbReference>
<dbReference type="NCBIfam" id="NF009487">
    <property type="entry name" value="PRK12849.1"/>
    <property type="match status" value="1"/>
</dbReference>
<dbReference type="NCBIfam" id="NF009488">
    <property type="entry name" value="PRK12850.1"/>
    <property type="match status" value="1"/>
</dbReference>
<dbReference type="NCBIfam" id="NF009489">
    <property type="entry name" value="PRK12851.1"/>
    <property type="match status" value="1"/>
</dbReference>
<dbReference type="PANTHER" id="PTHR45633">
    <property type="entry name" value="60 KDA HEAT SHOCK PROTEIN, MITOCHONDRIAL"/>
    <property type="match status" value="1"/>
</dbReference>
<dbReference type="Pfam" id="PF00118">
    <property type="entry name" value="Cpn60_TCP1"/>
    <property type="match status" value="1"/>
</dbReference>
<dbReference type="PRINTS" id="PR00298">
    <property type="entry name" value="CHAPERONIN60"/>
</dbReference>
<dbReference type="SUPFAM" id="SSF52029">
    <property type="entry name" value="GroEL apical domain-like"/>
    <property type="match status" value="1"/>
</dbReference>
<dbReference type="SUPFAM" id="SSF48592">
    <property type="entry name" value="GroEL equatorial domain-like"/>
    <property type="match status" value="1"/>
</dbReference>
<dbReference type="SUPFAM" id="SSF54849">
    <property type="entry name" value="GroEL-intermediate domain like"/>
    <property type="match status" value="1"/>
</dbReference>
<dbReference type="PROSITE" id="PS00296">
    <property type="entry name" value="CHAPERONINS_CPN60"/>
    <property type="match status" value="1"/>
</dbReference>
<feature type="chain" id="PRO_1000129980" description="Chaperonin GroEL">
    <location>
        <begin position="1"/>
        <end position="546"/>
    </location>
</feature>
<feature type="region of interest" description="Disordered" evidence="2">
    <location>
        <begin position="527"/>
        <end position="546"/>
    </location>
</feature>
<feature type="compositionally biased region" description="Gly residues" evidence="2">
    <location>
        <begin position="536"/>
        <end position="546"/>
    </location>
</feature>
<feature type="binding site" evidence="1">
    <location>
        <begin position="30"/>
        <end position="33"/>
    </location>
    <ligand>
        <name>ATP</name>
        <dbReference type="ChEBI" id="CHEBI:30616"/>
    </ligand>
</feature>
<feature type="binding site" evidence="1">
    <location>
        <position position="51"/>
    </location>
    <ligand>
        <name>ATP</name>
        <dbReference type="ChEBI" id="CHEBI:30616"/>
    </ligand>
</feature>
<feature type="binding site" evidence="1">
    <location>
        <begin position="87"/>
        <end position="91"/>
    </location>
    <ligand>
        <name>ATP</name>
        <dbReference type="ChEBI" id="CHEBI:30616"/>
    </ligand>
</feature>
<feature type="binding site" evidence="1">
    <location>
        <position position="415"/>
    </location>
    <ligand>
        <name>ATP</name>
        <dbReference type="ChEBI" id="CHEBI:30616"/>
    </ligand>
</feature>
<feature type="binding site" evidence="1">
    <location>
        <begin position="479"/>
        <end position="481"/>
    </location>
    <ligand>
        <name>ATP</name>
        <dbReference type="ChEBI" id="CHEBI:30616"/>
    </ligand>
</feature>
<feature type="binding site" evidence="1">
    <location>
        <position position="495"/>
    </location>
    <ligand>
        <name>ATP</name>
        <dbReference type="ChEBI" id="CHEBI:30616"/>
    </ligand>
</feature>
<sequence length="546" mass="57480">MAAKQVLFGDDARVRIVRGVNVLANAVKTTLGPKGRNVVLERSFGAPTVTKDGVSVAKEIELKDKFENIGAQLVKDVASKTSDNAGDGTTTATVLAQAIVQEGLKYVAAGFNPIDLKRGIDKAVSAAVAELAKQSKPVTTSKEIAQVGSISANSDESIGKIIADAMDKVGKEGVITVEDGKSLDNELDVVEGMQFDRGYLSPYFINNPDKQVAALDDPYVLIFDKKISNIRDLLPVLEQVAKSSRPLLIIAEDVEGEALATLVVNNIRGILKTTAVKAPGFGDRRKAMLEDIAILTGGVVISEETGMSLEKATLQELGQAKRIEVGKENTTIIDGAGDSKSIEARVKQIRVQIEEATSDYDREKLQERVAKLAGGVAVIRVGAATEVEMKEKKARVEDALHATRAAVEEGVVAGGGVALLRAKQAIADLKGDTADQNAGIKLILRAVEEPLRTIVTNAGEEASVVVNNVLNGKGNYGYNAATGEYTDLVEQGVLDPTKVTRTALQNAASVASLLLTAEAAVVELSEDKPAAPPMPGGMGGMGGMDF</sequence>
<gene>
    <name evidence="1" type="primary">groEL</name>
    <name evidence="1" type="synonym">groL</name>
    <name type="ordered locus">Bpet3932</name>
</gene>
<name>CH60_BORPD</name>
<proteinExistence type="inferred from homology"/>